<gene>
    <name type="primary">lyrm2</name>
    <name type="ORF">si:dkey-181i3.3</name>
</gene>
<sequence length="88" mass="10490">MAVSRLPPAALSLKQFLQRQKVLCLYRDLQRTIRRVPHESDRKYLRDWARDEFRRNKSNTDQDAIRMMISQAHNHLEELRRSLALAGC</sequence>
<comment type="function">
    <text evidence="1">Involved in efficient integration of the N-module into mitochondrial respiratory chain complex I.</text>
</comment>
<comment type="subcellular location">
    <subcellularLocation>
        <location evidence="1">Mitochondrion</location>
    </subcellularLocation>
</comment>
<comment type="similarity">
    <text evidence="3">Belongs to the complex I LYR family.</text>
</comment>
<dbReference type="EMBL" id="BX248418">
    <property type="protein sequence ID" value="CAI20771.1"/>
    <property type="molecule type" value="Genomic_DNA"/>
</dbReference>
<dbReference type="EMBL" id="BC124395">
    <property type="protein sequence ID" value="AAI24396.1"/>
    <property type="molecule type" value="mRNA"/>
</dbReference>
<dbReference type="RefSeq" id="NP_001153303.1">
    <property type="nucleotide sequence ID" value="NM_001159831.2"/>
</dbReference>
<dbReference type="SMR" id="Q5RIM0"/>
<dbReference type="FunCoup" id="Q5RIM0">
    <property type="interactions" value="323"/>
</dbReference>
<dbReference type="STRING" id="7955.ENSDARP00000041191"/>
<dbReference type="PaxDb" id="7955-ENSDARP00000041191"/>
<dbReference type="Ensembl" id="ENSDART00000041192">
    <property type="protein sequence ID" value="ENSDARP00000041191"/>
    <property type="gene ID" value="ENSDARG00000033138"/>
</dbReference>
<dbReference type="GeneID" id="569076"/>
<dbReference type="KEGG" id="dre:569076"/>
<dbReference type="AGR" id="ZFIN:ZDB-GENE-040914-27"/>
<dbReference type="CTD" id="57226"/>
<dbReference type="ZFIN" id="ZDB-GENE-040914-27">
    <property type="gene designation" value="lyrm2"/>
</dbReference>
<dbReference type="eggNOG" id="ENOG502S8DG">
    <property type="taxonomic scope" value="Eukaryota"/>
</dbReference>
<dbReference type="HOGENOM" id="CLU_151409_1_1_1"/>
<dbReference type="InParanoid" id="Q5RIM0"/>
<dbReference type="OMA" id="YMRDWAR"/>
<dbReference type="OrthoDB" id="74240at2759"/>
<dbReference type="PhylomeDB" id="Q5RIM0"/>
<dbReference type="TreeFam" id="TF323797"/>
<dbReference type="PRO" id="PR:Q5RIM0"/>
<dbReference type="Proteomes" id="UP000000437">
    <property type="component" value="Chromosome 20"/>
</dbReference>
<dbReference type="Bgee" id="ENSDARG00000033138">
    <property type="expression patterns" value="Expressed in muscle tissue and 23 other cell types or tissues"/>
</dbReference>
<dbReference type="GO" id="GO:0005739">
    <property type="term" value="C:mitochondrion"/>
    <property type="evidence" value="ECO:0000318"/>
    <property type="project" value="GO_Central"/>
</dbReference>
<dbReference type="GO" id="GO:0032981">
    <property type="term" value="P:mitochondrial respiratory chain complex I assembly"/>
    <property type="evidence" value="ECO:0000250"/>
    <property type="project" value="UniProtKB"/>
</dbReference>
<dbReference type="CDD" id="cd20262">
    <property type="entry name" value="Complex1_LYR_LYRM2"/>
    <property type="match status" value="1"/>
</dbReference>
<dbReference type="InterPro" id="IPR008011">
    <property type="entry name" value="Complex1_LYR_dom"/>
</dbReference>
<dbReference type="InterPro" id="IPR045293">
    <property type="entry name" value="Complex1_LYR_LYRM2"/>
</dbReference>
<dbReference type="PANTHER" id="PTHR13675">
    <property type="entry name" value="LYR MOTIF-CONTAINING PROTEIN 2"/>
    <property type="match status" value="1"/>
</dbReference>
<dbReference type="PANTHER" id="PTHR13675:SF0">
    <property type="entry name" value="LYR MOTIF-CONTAINING PROTEIN 2"/>
    <property type="match status" value="1"/>
</dbReference>
<dbReference type="Pfam" id="PF05347">
    <property type="entry name" value="Complex1_LYR"/>
    <property type="match status" value="1"/>
</dbReference>
<proteinExistence type="inferred from homology"/>
<organism>
    <name type="scientific">Danio rerio</name>
    <name type="common">Zebrafish</name>
    <name type="synonym">Brachydanio rerio</name>
    <dbReference type="NCBI Taxonomy" id="7955"/>
    <lineage>
        <taxon>Eukaryota</taxon>
        <taxon>Metazoa</taxon>
        <taxon>Chordata</taxon>
        <taxon>Craniata</taxon>
        <taxon>Vertebrata</taxon>
        <taxon>Euteleostomi</taxon>
        <taxon>Actinopterygii</taxon>
        <taxon>Neopterygii</taxon>
        <taxon>Teleostei</taxon>
        <taxon>Ostariophysi</taxon>
        <taxon>Cypriniformes</taxon>
        <taxon>Danionidae</taxon>
        <taxon>Danioninae</taxon>
        <taxon>Danio</taxon>
    </lineage>
</organism>
<keyword id="KW-0496">Mitochondrion</keyword>
<keyword id="KW-1185">Reference proteome</keyword>
<keyword id="KW-0809">Transit peptide</keyword>
<accession>Q5RIM0</accession>
<name>LYRM2_DANRE</name>
<evidence type="ECO:0000250" key="1">
    <source>
        <dbReference type="UniProtKB" id="Q9NU23"/>
    </source>
</evidence>
<evidence type="ECO:0000255" key="2"/>
<evidence type="ECO:0000305" key="3"/>
<protein>
    <recommendedName>
        <fullName>LYR motif-containing protein 2</fullName>
    </recommendedName>
</protein>
<reference key="1">
    <citation type="journal article" date="2013" name="Nature">
        <title>The zebrafish reference genome sequence and its relationship to the human genome.</title>
        <authorList>
            <person name="Howe K."/>
            <person name="Clark M.D."/>
            <person name="Torroja C.F."/>
            <person name="Torrance J."/>
            <person name="Berthelot C."/>
            <person name="Muffato M."/>
            <person name="Collins J.E."/>
            <person name="Humphray S."/>
            <person name="McLaren K."/>
            <person name="Matthews L."/>
            <person name="McLaren S."/>
            <person name="Sealy I."/>
            <person name="Caccamo M."/>
            <person name="Churcher C."/>
            <person name="Scott C."/>
            <person name="Barrett J.C."/>
            <person name="Koch R."/>
            <person name="Rauch G.J."/>
            <person name="White S."/>
            <person name="Chow W."/>
            <person name="Kilian B."/>
            <person name="Quintais L.T."/>
            <person name="Guerra-Assuncao J.A."/>
            <person name="Zhou Y."/>
            <person name="Gu Y."/>
            <person name="Yen J."/>
            <person name="Vogel J.H."/>
            <person name="Eyre T."/>
            <person name="Redmond S."/>
            <person name="Banerjee R."/>
            <person name="Chi J."/>
            <person name="Fu B."/>
            <person name="Langley E."/>
            <person name="Maguire S.F."/>
            <person name="Laird G.K."/>
            <person name="Lloyd D."/>
            <person name="Kenyon E."/>
            <person name="Donaldson S."/>
            <person name="Sehra H."/>
            <person name="Almeida-King J."/>
            <person name="Loveland J."/>
            <person name="Trevanion S."/>
            <person name="Jones M."/>
            <person name="Quail M."/>
            <person name="Willey D."/>
            <person name="Hunt A."/>
            <person name="Burton J."/>
            <person name="Sims S."/>
            <person name="McLay K."/>
            <person name="Plumb B."/>
            <person name="Davis J."/>
            <person name="Clee C."/>
            <person name="Oliver K."/>
            <person name="Clark R."/>
            <person name="Riddle C."/>
            <person name="Elliot D."/>
            <person name="Threadgold G."/>
            <person name="Harden G."/>
            <person name="Ware D."/>
            <person name="Begum S."/>
            <person name="Mortimore B."/>
            <person name="Kerry G."/>
            <person name="Heath P."/>
            <person name="Phillimore B."/>
            <person name="Tracey A."/>
            <person name="Corby N."/>
            <person name="Dunn M."/>
            <person name="Johnson C."/>
            <person name="Wood J."/>
            <person name="Clark S."/>
            <person name="Pelan S."/>
            <person name="Griffiths G."/>
            <person name="Smith M."/>
            <person name="Glithero R."/>
            <person name="Howden P."/>
            <person name="Barker N."/>
            <person name="Lloyd C."/>
            <person name="Stevens C."/>
            <person name="Harley J."/>
            <person name="Holt K."/>
            <person name="Panagiotidis G."/>
            <person name="Lovell J."/>
            <person name="Beasley H."/>
            <person name="Henderson C."/>
            <person name="Gordon D."/>
            <person name="Auger K."/>
            <person name="Wright D."/>
            <person name="Collins J."/>
            <person name="Raisen C."/>
            <person name="Dyer L."/>
            <person name="Leung K."/>
            <person name="Robertson L."/>
            <person name="Ambridge K."/>
            <person name="Leongamornlert D."/>
            <person name="McGuire S."/>
            <person name="Gilderthorp R."/>
            <person name="Griffiths C."/>
            <person name="Manthravadi D."/>
            <person name="Nichol S."/>
            <person name="Barker G."/>
            <person name="Whitehead S."/>
            <person name="Kay M."/>
            <person name="Brown J."/>
            <person name="Murnane C."/>
            <person name="Gray E."/>
            <person name="Humphries M."/>
            <person name="Sycamore N."/>
            <person name="Barker D."/>
            <person name="Saunders D."/>
            <person name="Wallis J."/>
            <person name="Babbage A."/>
            <person name="Hammond S."/>
            <person name="Mashreghi-Mohammadi M."/>
            <person name="Barr L."/>
            <person name="Martin S."/>
            <person name="Wray P."/>
            <person name="Ellington A."/>
            <person name="Matthews N."/>
            <person name="Ellwood M."/>
            <person name="Woodmansey R."/>
            <person name="Clark G."/>
            <person name="Cooper J."/>
            <person name="Tromans A."/>
            <person name="Grafham D."/>
            <person name="Skuce C."/>
            <person name="Pandian R."/>
            <person name="Andrews R."/>
            <person name="Harrison E."/>
            <person name="Kimberley A."/>
            <person name="Garnett J."/>
            <person name="Fosker N."/>
            <person name="Hall R."/>
            <person name="Garner P."/>
            <person name="Kelly D."/>
            <person name="Bird C."/>
            <person name="Palmer S."/>
            <person name="Gehring I."/>
            <person name="Berger A."/>
            <person name="Dooley C.M."/>
            <person name="Ersan-Urun Z."/>
            <person name="Eser C."/>
            <person name="Geiger H."/>
            <person name="Geisler M."/>
            <person name="Karotki L."/>
            <person name="Kirn A."/>
            <person name="Konantz J."/>
            <person name="Konantz M."/>
            <person name="Oberlander M."/>
            <person name="Rudolph-Geiger S."/>
            <person name="Teucke M."/>
            <person name="Lanz C."/>
            <person name="Raddatz G."/>
            <person name="Osoegawa K."/>
            <person name="Zhu B."/>
            <person name="Rapp A."/>
            <person name="Widaa S."/>
            <person name="Langford C."/>
            <person name="Yang F."/>
            <person name="Schuster S.C."/>
            <person name="Carter N.P."/>
            <person name="Harrow J."/>
            <person name="Ning Z."/>
            <person name="Herrero J."/>
            <person name="Searle S.M."/>
            <person name="Enright A."/>
            <person name="Geisler R."/>
            <person name="Plasterk R.H."/>
            <person name="Lee C."/>
            <person name="Westerfield M."/>
            <person name="de Jong P.J."/>
            <person name="Zon L.I."/>
            <person name="Postlethwait J.H."/>
            <person name="Nusslein-Volhard C."/>
            <person name="Hubbard T.J."/>
            <person name="Roest Crollius H."/>
            <person name="Rogers J."/>
            <person name="Stemple D.L."/>
        </authorList>
    </citation>
    <scope>NUCLEOTIDE SEQUENCE [LARGE SCALE GENOMIC DNA]</scope>
    <source>
        <strain>Tuebingen</strain>
    </source>
</reference>
<reference key="2">
    <citation type="submission" date="2006-09" db="EMBL/GenBank/DDBJ databases">
        <authorList>
            <consortium name="NIH - Zebrafish Gene Collection (ZGC) project"/>
        </authorList>
    </citation>
    <scope>NUCLEOTIDE SEQUENCE [LARGE SCALE MRNA]</scope>
    <source>
        <tissue>Larva</tissue>
    </source>
</reference>
<feature type="transit peptide" description="Mitochondrion" evidence="2">
    <location>
        <begin position="1"/>
        <end position="19"/>
    </location>
</feature>
<feature type="chain" id="PRO_0000359763" description="LYR motif-containing protein 2">
    <location>
        <begin position="20"/>
        <end position="88"/>
    </location>
</feature>